<keyword id="KW-0963">Cytoplasm</keyword>
<keyword id="KW-0488">Methylation</keyword>
<keyword id="KW-0648">Protein biosynthesis</keyword>
<gene>
    <name evidence="1" type="primary">prfA</name>
    <name type="ordered locus">NMCC_1599</name>
</gene>
<dbReference type="EMBL" id="CP000381">
    <property type="protein sequence ID" value="ABX73747.1"/>
    <property type="molecule type" value="Genomic_DNA"/>
</dbReference>
<dbReference type="RefSeq" id="WP_012221933.1">
    <property type="nucleotide sequence ID" value="NC_010120.1"/>
</dbReference>
<dbReference type="SMR" id="A9M1Q8"/>
<dbReference type="KEGG" id="nmn:NMCC_1599"/>
<dbReference type="HOGENOM" id="CLU_036856_0_1_4"/>
<dbReference type="Proteomes" id="UP000001177">
    <property type="component" value="Chromosome"/>
</dbReference>
<dbReference type="GO" id="GO:0005737">
    <property type="term" value="C:cytoplasm"/>
    <property type="evidence" value="ECO:0007669"/>
    <property type="project" value="UniProtKB-SubCell"/>
</dbReference>
<dbReference type="GO" id="GO:0016149">
    <property type="term" value="F:translation release factor activity, codon specific"/>
    <property type="evidence" value="ECO:0007669"/>
    <property type="project" value="UniProtKB-UniRule"/>
</dbReference>
<dbReference type="FunFam" id="3.30.160.20:FF:000004">
    <property type="entry name" value="Peptide chain release factor 1"/>
    <property type="match status" value="1"/>
</dbReference>
<dbReference type="FunFam" id="3.30.70.1660:FF:000002">
    <property type="entry name" value="Peptide chain release factor 1"/>
    <property type="match status" value="1"/>
</dbReference>
<dbReference type="FunFam" id="3.30.70.1660:FF:000004">
    <property type="entry name" value="Peptide chain release factor 1"/>
    <property type="match status" value="1"/>
</dbReference>
<dbReference type="Gene3D" id="3.30.160.20">
    <property type="match status" value="1"/>
</dbReference>
<dbReference type="Gene3D" id="3.30.70.1660">
    <property type="match status" value="2"/>
</dbReference>
<dbReference type="Gene3D" id="6.10.140.1950">
    <property type="match status" value="1"/>
</dbReference>
<dbReference type="HAMAP" id="MF_00093">
    <property type="entry name" value="Rel_fac_1"/>
    <property type="match status" value="1"/>
</dbReference>
<dbReference type="InterPro" id="IPR005139">
    <property type="entry name" value="PCRF"/>
</dbReference>
<dbReference type="InterPro" id="IPR000352">
    <property type="entry name" value="Pep_chain_release_fac_I"/>
</dbReference>
<dbReference type="InterPro" id="IPR045853">
    <property type="entry name" value="Pep_chain_release_fac_I_sf"/>
</dbReference>
<dbReference type="InterPro" id="IPR050057">
    <property type="entry name" value="Prokaryotic/Mito_RF"/>
</dbReference>
<dbReference type="InterPro" id="IPR004373">
    <property type="entry name" value="RF-1"/>
</dbReference>
<dbReference type="NCBIfam" id="TIGR00019">
    <property type="entry name" value="prfA"/>
    <property type="match status" value="1"/>
</dbReference>
<dbReference type="NCBIfam" id="NF001859">
    <property type="entry name" value="PRK00591.1"/>
    <property type="match status" value="1"/>
</dbReference>
<dbReference type="PANTHER" id="PTHR43804">
    <property type="entry name" value="LD18447P"/>
    <property type="match status" value="1"/>
</dbReference>
<dbReference type="PANTHER" id="PTHR43804:SF7">
    <property type="entry name" value="LD18447P"/>
    <property type="match status" value="1"/>
</dbReference>
<dbReference type="Pfam" id="PF03462">
    <property type="entry name" value="PCRF"/>
    <property type="match status" value="1"/>
</dbReference>
<dbReference type="Pfam" id="PF00472">
    <property type="entry name" value="RF-1"/>
    <property type="match status" value="1"/>
</dbReference>
<dbReference type="SMART" id="SM00937">
    <property type="entry name" value="PCRF"/>
    <property type="match status" value="1"/>
</dbReference>
<dbReference type="SUPFAM" id="SSF75620">
    <property type="entry name" value="Release factor"/>
    <property type="match status" value="1"/>
</dbReference>
<dbReference type="PROSITE" id="PS00745">
    <property type="entry name" value="RF_PROK_I"/>
    <property type="match status" value="1"/>
</dbReference>
<evidence type="ECO:0000255" key="1">
    <source>
        <dbReference type="HAMAP-Rule" id="MF_00093"/>
    </source>
</evidence>
<protein>
    <recommendedName>
        <fullName evidence="1">Peptide chain release factor 1</fullName>
        <shortName evidence="1">RF-1</shortName>
    </recommendedName>
</protein>
<name>RF1_NEIM0</name>
<accession>A9M1Q8</accession>
<comment type="function">
    <text evidence="1">Peptide chain release factor 1 directs the termination of translation in response to the peptide chain termination codons UAG and UAA.</text>
</comment>
<comment type="subcellular location">
    <subcellularLocation>
        <location evidence="1">Cytoplasm</location>
    </subcellularLocation>
</comment>
<comment type="PTM">
    <text evidence="1">Methylated by PrmC. Methylation increases the termination efficiency of RF1.</text>
</comment>
<comment type="similarity">
    <text evidence="1">Belongs to the prokaryotic/mitochondrial release factor family.</text>
</comment>
<organism>
    <name type="scientific">Neisseria meningitidis serogroup C (strain 053442)</name>
    <dbReference type="NCBI Taxonomy" id="374833"/>
    <lineage>
        <taxon>Bacteria</taxon>
        <taxon>Pseudomonadati</taxon>
        <taxon>Pseudomonadota</taxon>
        <taxon>Betaproteobacteria</taxon>
        <taxon>Neisseriales</taxon>
        <taxon>Neisseriaceae</taxon>
        <taxon>Neisseria</taxon>
    </lineage>
</organism>
<sequence>MKPSILEKLQQLGDRLEEVTHLLGQPEATADMDNYRKLTREHAELTPVVEVFQNYRLAQSDLADAEEMLSDPEMKDFAAEEIEAAKAKIGALDTELQKLLLPKDADDDKNIFIEVRAGTGGDEAALFAGDLLRMYSRYAERNRWQVEIVSANESELGGYKEVIARIIGLGAYSRLKFESGGHRVQRVPATESQGRIHTSACTVAVMPEADELEDIELNPVDLRIDTFRASGAGGQHINKTDSAVRITHLPTGMVVECQDGRSQHANKAQAMKVLAARLNDAQKREAQAKEAAERKSLIGSGDRSERIRTYNYPQGRVTDHRINLTLHKLDFVMDGDLAEITDALIAEHQAELLAAMGD</sequence>
<reference key="1">
    <citation type="journal article" date="2008" name="Genomics">
        <title>Characterization of ST-4821 complex, a unique Neisseria meningitidis clone.</title>
        <authorList>
            <person name="Peng J."/>
            <person name="Yang L."/>
            <person name="Yang F."/>
            <person name="Yang J."/>
            <person name="Yan Y."/>
            <person name="Nie H."/>
            <person name="Zhang X."/>
            <person name="Xiong Z."/>
            <person name="Jiang Y."/>
            <person name="Cheng F."/>
            <person name="Xu X."/>
            <person name="Chen S."/>
            <person name="Sun L."/>
            <person name="Li W."/>
            <person name="Shen Y."/>
            <person name="Shao Z."/>
            <person name="Liang X."/>
            <person name="Xu J."/>
            <person name="Jin Q."/>
        </authorList>
    </citation>
    <scope>NUCLEOTIDE SEQUENCE [LARGE SCALE GENOMIC DNA]</scope>
    <source>
        <strain>053442</strain>
    </source>
</reference>
<proteinExistence type="inferred from homology"/>
<feature type="chain" id="PRO_1000075505" description="Peptide chain release factor 1">
    <location>
        <begin position="1"/>
        <end position="358"/>
    </location>
</feature>
<feature type="modified residue" description="N5-methylglutamine" evidence="1">
    <location>
        <position position="235"/>
    </location>
</feature>